<reference key="1">
    <citation type="journal article" date="1995" name="Gene">
        <title>Restriction and modification systems of Neisseria gonorrhoeae.</title>
        <authorList>
            <person name="Stein D.C."/>
            <person name="Gunn J.S."/>
            <person name="Radlinska M."/>
            <person name="Piekarowicz A."/>
        </authorList>
    </citation>
    <scope>NUCLEOTIDE SEQUENCE [GENOMIC DNA]</scope>
    <source>
        <strain>WR302</strain>
    </source>
</reference>
<organism>
    <name type="scientific">Neisseria gonorrhoeae</name>
    <dbReference type="NCBI Taxonomy" id="485"/>
    <lineage>
        <taxon>Bacteria</taxon>
        <taxon>Pseudomonadati</taxon>
        <taxon>Pseudomonadota</taxon>
        <taxon>Betaproteobacteria</taxon>
        <taxon>Neisseriales</taxon>
        <taxon>Neisseriaceae</taxon>
        <taxon>Neisseria</taxon>
    </lineage>
</organism>
<accession>Q50974</accession>
<comment type="function">
    <text evidence="1">Catalyzes the isomerization between 2-isopropylmalate and 3-isopropylmalate, via the formation of 2-isopropylmaleate.</text>
</comment>
<comment type="catalytic activity">
    <reaction>
        <text>(2R,3S)-3-isopropylmalate = (2S)-2-isopropylmalate</text>
        <dbReference type="Rhea" id="RHEA:32287"/>
        <dbReference type="ChEBI" id="CHEBI:1178"/>
        <dbReference type="ChEBI" id="CHEBI:35121"/>
        <dbReference type="EC" id="4.2.1.33"/>
    </reaction>
</comment>
<comment type="pathway">
    <text>Amino-acid biosynthesis; L-leucine biosynthesis; L-leucine from 3-methyl-2-oxobutanoate: step 2/4.</text>
</comment>
<comment type="subunit">
    <text evidence="1">Heterodimer of LeuC and LeuD.</text>
</comment>
<comment type="similarity">
    <text evidence="2">Belongs to the LeuD family. LeuD type 1 subfamily.</text>
</comment>
<feature type="chain" id="PRO_0000141841" description="3-isopropylmalate dehydratase small subunit">
    <location>
        <begin position="1" status="less than"/>
        <end position="79"/>
    </location>
</feature>
<feature type="non-terminal residue">
    <location>
        <position position="1"/>
    </location>
</feature>
<protein>
    <recommendedName>
        <fullName>3-isopropylmalate dehydratase small subunit</fullName>
        <ecNumber>4.2.1.33</ecNumber>
    </recommendedName>
    <alternativeName>
        <fullName>Alpha-IPM isomerase</fullName>
        <shortName>IPMI</shortName>
    </alternativeName>
    <alternativeName>
        <fullName>Isopropylmalate isomerase</fullName>
    </alternativeName>
</protein>
<keyword id="KW-0028">Amino-acid biosynthesis</keyword>
<keyword id="KW-0100">Branched-chain amino acid biosynthesis</keyword>
<keyword id="KW-0432">Leucine biosynthesis</keyword>
<keyword id="KW-0456">Lyase</keyword>
<name>LEUD_NEIGO</name>
<gene>
    <name type="primary">leuD</name>
</gene>
<evidence type="ECO:0000250" key="1"/>
<evidence type="ECO:0000305" key="2"/>
<sequence length="79" mass="9101">VDRPFKEVEANEGYRLSIDLAEQTLTTPGGETFTFDITEHRKHCLLNGLDEIGLTLQHADKIKAFEEKRRQSQPWLFNG</sequence>
<proteinExistence type="inferred from homology"/>
<dbReference type="EC" id="4.2.1.33"/>
<dbReference type="EMBL" id="U43735">
    <property type="protein sequence ID" value="AAA86267.1"/>
    <property type="molecule type" value="Genomic_DNA"/>
</dbReference>
<dbReference type="SMR" id="Q50974"/>
<dbReference type="UniPathway" id="UPA00048">
    <property type="reaction ID" value="UER00071"/>
</dbReference>
<dbReference type="GO" id="GO:0003861">
    <property type="term" value="F:3-isopropylmalate dehydratase activity"/>
    <property type="evidence" value="ECO:0007669"/>
    <property type="project" value="UniProtKB-EC"/>
</dbReference>
<dbReference type="GO" id="GO:0009098">
    <property type="term" value="P:L-leucine biosynthetic process"/>
    <property type="evidence" value="ECO:0007669"/>
    <property type="project" value="UniProtKB-UniPathway"/>
</dbReference>
<dbReference type="Gene3D" id="3.20.19.10">
    <property type="entry name" value="Aconitase, domain 4"/>
    <property type="match status" value="1"/>
</dbReference>
<dbReference type="InterPro" id="IPR015928">
    <property type="entry name" value="Aconitase/3IPM_dehydase_swvl"/>
</dbReference>
<dbReference type="SUPFAM" id="SSF52016">
    <property type="entry name" value="LeuD/IlvD-like"/>
    <property type="match status" value="1"/>
</dbReference>